<reference key="1">
    <citation type="journal article" date="1993" name="Biochem. Biophys. Res. Commun.">
        <title>Purification of calreticulin-like protein(s) from spinach leaves.</title>
        <authorList>
            <person name="Menegazzi P."/>
            <person name="Guzzo F."/>
            <person name="Baldan B."/>
            <person name="Mariani P."/>
            <person name="Treves S."/>
        </authorList>
    </citation>
    <scope>PROTEIN SEQUENCE</scope>
    <source>
        <tissue>Leaf</tissue>
    </source>
</reference>
<dbReference type="PIR" id="PC1240">
    <property type="entry name" value="PC1240"/>
</dbReference>
<dbReference type="Proteomes" id="UP001155700">
    <property type="component" value="Unplaced"/>
</dbReference>
<dbReference type="GO" id="GO:0005788">
    <property type="term" value="C:endoplasmic reticulum lumen"/>
    <property type="evidence" value="ECO:0007669"/>
    <property type="project" value="UniProtKB-SubCell"/>
</dbReference>
<dbReference type="GO" id="GO:0030246">
    <property type="term" value="F:carbohydrate binding"/>
    <property type="evidence" value="ECO:0007669"/>
    <property type="project" value="UniProtKB-KW"/>
</dbReference>
<dbReference type="GO" id="GO:0046872">
    <property type="term" value="F:metal ion binding"/>
    <property type="evidence" value="ECO:0007669"/>
    <property type="project" value="UniProtKB-KW"/>
</dbReference>
<proteinExistence type="evidence at protein level"/>
<comment type="function">
    <text evidence="1">Molecular calcium-binding chaperone promoting folding, oligomeric assembly and quality control in the ER via the calreticulin/calnexin cycle. This lectin may interact transiently with almost all of the monoglucosylated glycoproteins that are synthesized in the ER (By similarity).</text>
</comment>
<comment type="subcellular location">
    <subcellularLocation>
        <location>Endoplasmic reticulum lumen</location>
    </subcellularLocation>
</comment>
<comment type="PTM">
    <text>Glycosylated.</text>
</comment>
<comment type="similarity">
    <text evidence="2">Belongs to the calreticulin family.</text>
</comment>
<protein>
    <recommendedName>
        <fullName>Calreticulin</fullName>
    </recommendedName>
</protein>
<name>CALR_SPIOL</name>
<sequence length="20" mass="2645">KVFFEERFEDGWENRWVKKD</sequence>
<evidence type="ECO:0000250" key="1"/>
<evidence type="ECO:0000305" key="2"/>
<feature type="chain" id="PRO_0000208523" description="Calreticulin">
    <location>
        <begin position="1"/>
        <end position="20" status="greater than"/>
    </location>
</feature>
<feature type="non-terminal residue">
    <location>
        <position position="20"/>
    </location>
</feature>
<keyword id="KW-0106">Calcium</keyword>
<keyword id="KW-0143">Chaperone</keyword>
<keyword id="KW-0903">Direct protein sequencing</keyword>
<keyword id="KW-0256">Endoplasmic reticulum</keyword>
<keyword id="KW-0325">Glycoprotein</keyword>
<keyword id="KW-0430">Lectin</keyword>
<keyword id="KW-0479">Metal-binding</keyword>
<keyword id="KW-1185">Reference proteome</keyword>
<keyword id="KW-0862">Zinc</keyword>
<accession>P30806</accession>
<organism>
    <name type="scientific">Spinacia oleracea</name>
    <name type="common">Spinach</name>
    <dbReference type="NCBI Taxonomy" id="3562"/>
    <lineage>
        <taxon>Eukaryota</taxon>
        <taxon>Viridiplantae</taxon>
        <taxon>Streptophyta</taxon>
        <taxon>Embryophyta</taxon>
        <taxon>Tracheophyta</taxon>
        <taxon>Spermatophyta</taxon>
        <taxon>Magnoliopsida</taxon>
        <taxon>eudicotyledons</taxon>
        <taxon>Gunneridae</taxon>
        <taxon>Pentapetalae</taxon>
        <taxon>Caryophyllales</taxon>
        <taxon>Chenopodiaceae</taxon>
        <taxon>Chenopodioideae</taxon>
        <taxon>Anserineae</taxon>
        <taxon>Spinacia</taxon>
    </lineage>
</organism>